<evidence type="ECO:0000255" key="1">
    <source>
        <dbReference type="HAMAP-Rule" id="MF_00083"/>
    </source>
</evidence>
<gene>
    <name evidence="1" type="primary">pth</name>
    <name type="ordered locus">Tola_2305</name>
</gene>
<sequence>MTQPIQLIVGLGNPGPEYANTRHNAGAWYVASLAERYNGSLREDPKYFGLTGRIQINGQDVRLLIPTTFMNLSGKSVVALAKFFQIPPESILVAHDELDLPPGVAKFKQGGGHGGHNGLKDIINKLGNNNQFHRLRLGIGHPGTKEQVVGFVLTKAPKAEQQLIDDALDEAVRATDILFTNDMTKAMNRLHSFKATA</sequence>
<dbReference type="EC" id="3.1.1.29" evidence="1"/>
<dbReference type="EMBL" id="CP001616">
    <property type="protein sequence ID" value="ACQ93902.1"/>
    <property type="molecule type" value="Genomic_DNA"/>
</dbReference>
<dbReference type="RefSeq" id="WP_015879370.1">
    <property type="nucleotide sequence ID" value="NC_012691.1"/>
</dbReference>
<dbReference type="SMR" id="C4L932"/>
<dbReference type="STRING" id="595494.Tola_2305"/>
<dbReference type="KEGG" id="tau:Tola_2305"/>
<dbReference type="eggNOG" id="COG0193">
    <property type="taxonomic scope" value="Bacteria"/>
</dbReference>
<dbReference type="HOGENOM" id="CLU_062456_3_1_6"/>
<dbReference type="OrthoDB" id="9800507at2"/>
<dbReference type="Proteomes" id="UP000009073">
    <property type="component" value="Chromosome"/>
</dbReference>
<dbReference type="GO" id="GO:0005737">
    <property type="term" value="C:cytoplasm"/>
    <property type="evidence" value="ECO:0007669"/>
    <property type="project" value="UniProtKB-SubCell"/>
</dbReference>
<dbReference type="GO" id="GO:0004045">
    <property type="term" value="F:peptidyl-tRNA hydrolase activity"/>
    <property type="evidence" value="ECO:0007669"/>
    <property type="project" value="UniProtKB-UniRule"/>
</dbReference>
<dbReference type="GO" id="GO:0000049">
    <property type="term" value="F:tRNA binding"/>
    <property type="evidence" value="ECO:0007669"/>
    <property type="project" value="UniProtKB-UniRule"/>
</dbReference>
<dbReference type="GO" id="GO:0006515">
    <property type="term" value="P:protein quality control for misfolded or incompletely synthesized proteins"/>
    <property type="evidence" value="ECO:0007669"/>
    <property type="project" value="UniProtKB-UniRule"/>
</dbReference>
<dbReference type="GO" id="GO:0072344">
    <property type="term" value="P:rescue of stalled ribosome"/>
    <property type="evidence" value="ECO:0007669"/>
    <property type="project" value="UniProtKB-UniRule"/>
</dbReference>
<dbReference type="CDD" id="cd00462">
    <property type="entry name" value="PTH"/>
    <property type="match status" value="1"/>
</dbReference>
<dbReference type="FunFam" id="3.40.50.1470:FF:000001">
    <property type="entry name" value="Peptidyl-tRNA hydrolase"/>
    <property type="match status" value="1"/>
</dbReference>
<dbReference type="Gene3D" id="3.40.50.1470">
    <property type="entry name" value="Peptidyl-tRNA hydrolase"/>
    <property type="match status" value="1"/>
</dbReference>
<dbReference type="HAMAP" id="MF_00083">
    <property type="entry name" value="Pept_tRNA_hydro_bact"/>
    <property type="match status" value="1"/>
</dbReference>
<dbReference type="InterPro" id="IPR001328">
    <property type="entry name" value="Pept_tRNA_hydro"/>
</dbReference>
<dbReference type="InterPro" id="IPR018171">
    <property type="entry name" value="Pept_tRNA_hydro_CS"/>
</dbReference>
<dbReference type="InterPro" id="IPR036416">
    <property type="entry name" value="Pept_tRNA_hydro_sf"/>
</dbReference>
<dbReference type="NCBIfam" id="TIGR00447">
    <property type="entry name" value="pth"/>
    <property type="match status" value="1"/>
</dbReference>
<dbReference type="PANTHER" id="PTHR17224">
    <property type="entry name" value="PEPTIDYL-TRNA HYDROLASE"/>
    <property type="match status" value="1"/>
</dbReference>
<dbReference type="PANTHER" id="PTHR17224:SF1">
    <property type="entry name" value="PEPTIDYL-TRNA HYDROLASE"/>
    <property type="match status" value="1"/>
</dbReference>
<dbReference type="Pfam" id="PF01195">
    <property type="entry name" value="Pept_tRNA_hydro"/>
    <property type="match status" value="1"/>
</dbReference>
<dbReference type="SUPFAM" id="SSF53178">
    <property type="entry name" value="Peptidyl-tRNA hydrolase-like"/>
    <property type="match status" value="1"/>
</dbReference>
<dbReference type="PROSITE" id="PS01196">
    <property type="entry name" value="PEPT_TRNA_HYDROL_2"/>
    <property type="match status" value="1"/>
</dbReference>
<keyword id="KW-0963">Cytoplasm</keyword>
<keyword id="KW-0378">Hydrolase</keyword>
<keyword id="KW-1185">Reference proteome</keyword>
<keyword id="KW-0694">RNA-binding</keyword>
<keyword id="KW-0820">tRNA-binding</keyword>
<feature type="chain" id="PRO_1000202601" description="Peptidyl-tRNA hydrolase">
    <location>
        <begin position="1"/>
        <end position="197"/>
    </location>
</feature>
<feature type="active site" description="Proton acceptor" evidence="1">
    <location>
        <position position="23"/>
    </location>
</feature>
<feature type="binding site" evidence="1">
    <location>
        <position position="18"/>
    </location>
    <ligand>
        <name>tRNA</name>
        <dbReference type="ChEBI" id="CHEBI:17843"/>
    </ligand>
</feature>
<feature type="binding site" evidence="1">
    <location>
        <position position="69"/>
    </location>
    <ligand>
        <name>tRNA</name>
        <dbReference type="ChEBI" id="CHEBI:17843"/>
    </ligand>
</feature>
<feature type="binding site" evidence="1">
    <location>
        <position position="71"/>
    </location>
    <ligand>
        <name>tRNA</name>
        <dbReference type="ChEBI" id="CHEBI:17843"/>
    </ligand>
</feature>
<feature type="binding site" evidence="1">
    <location>
        <position position="117"/>
    </location>
    <ligand>
        <name>tRNA</name>
        <dbReference type="ChEBI" id="CHEBI:17843"/>
    </ligand>
</feature>
<feature type="site" description="Discriminates between blocked and unblocked aminoacyl-tRNA" evidence="1">
    <location>
        <position position="13"/>
    </location>
</feature>
<feature type="site" description="Stabilizes the basic form of H active site to accept a proton" evidence="1">
    <location>
        <position position="96"/>
    </location>
</feature>
<comment type="function">
    <text evidence="1">Hydrolyzes ribosome-free peptidyl-tRNAs (with 1 or more amino acids incorporated), which drop off the ribosome during protein synthesis, or as a result of ribosome stalling.</text>
</comment>
<comment type="function">
    <text evidence="1">Catalyzes the release of premature peptidyl moieties from peptidyl-tRNA molecules trapped in stalled 50S ribosomal subunits, and thus maintains levels of free tRNAs and 50S ribosomes.</text>
</comment>
<comment type="catalytic activity">
    <reaction evidence="1">
        <text>an N-acyl-L-alpha-aminoacyl-tRNA + H2O = an N-acyl-L-amino acid + a tRNA + H(+)</text>
        <dbReference type="Rhea" id="RHEA:54448"/>
        <dbReference type="Rhea" id="RHEA-COMP:10123"/>
        <dbReference type="Rhea" id="RHEA-COMP:13883"/>
        <dbReference type="ChEBI" id="CHEBI:15377"/>
        <dbReference type="ChEBI" id="CHEBI:15378"/>
        <dbReference type="ChEBI" id="CHEBI:59874"/>
        <dbReference type="ChEBI" id="CHEBI:78442"/>
        <dbReference type="ChEBI" id="CHEBI:138191"/>
        <dbReference type="EC" id="3.1.1.29"/>
    </reaction>
</comment>
<comment type="subunit">
    <text evidence="1">Monomer.</text>
</comment>
<comment type="subcellular location">
    <subcellularLocation>
        <location evidence="1">Cytoplasm</location>
    </subcellularLocation>
</comment>
<comment type="similarity">
    <text evidence="1">Belongs to the PTH family.</text>
</comment>
<proteinExistence type="inferred from homology"/>
<protein>
    <recommendedName>
        <fullName evidence="1">Peptidyl-tRNA hydrolase</fullName>
        <shortName evidence="1">Pth</shortName>
        <ecNumber evidence="1">3.1.1.29</ecNumber>
    </recommendedName>
</protein>
<accession>C4L932</accession>
<organism>
    <name type="scientific">Tolumonas auensis (strain DSM 9187 / NBRC 110442 / TA 4)</name>
    <dbReference type="NCBI Taxonomy" id="595494"/>
    <lineage>
        <taxon>Bacteria</taxon>
        <taxon>Pseudomonadati</taxon>
        <taxon>Pseudomonadota</taxon>
        <taxon>Gammaproteobacteria</taxon>
        <taxon>Aeromonadales</taxon>
        <taxon>Aeromonadaceae</taxon>
        <taxon>Tolumonas</taxon>
    </lineage>
</organism>
<reference key="1">
    <citation type="submission" date="2009-05" db="EMBL/GenBank/DDBJ databases">
        <title>Complete sequence of Tolumonas auensis DSM 9187.</title>
        <authorList>
            <consortium name="US DOE Joint Genome Institute"/>
            <person name="Lucas S."/>
            <person name="Copeland A."/>
            <person name="Lapidus A."/>
            <person name="Glavina del Rio T."/>
            <person name="Tice H."/>
            <person name="Bruce D."/>
            <person name="Goodwin L."/>
            <person name="Pitluck S."/>
            <person name="Chertkov O."/>
            <person name="Brettin T."/>
            <person name="Detter J.C."/>
            <person name="Han C."/>
            <person name="Larimer F."/>
            <person name="Land M."/>
            <person name="Hauser L."/>
            <person name="Kyrpides N."/>
            <person name="Mikhailova N."/>
            <person name="Spring S."/>
            <person name="Beller H."/>
        </authorList>
    </citation>
    <scope>NUCLEOTIDE SEQUENCE [LARGE SCALE GENOMIC DNA]</scope>
    <source>
        <strain>DSM 9187 / NBRC 110442 / TA 4</strain>
    </source>
</reference>
<name>PTH_TOLAT</name>